<gene>
    <name type="primary">manB</name>
    <name type="synonym">rfbK</name>
</gene>
<reference key="1">
    <citation type="journal article" date="1993" name="J. Bacteriol.">
        <title>Identification, expression, and DNA sequence of the GDP-mannose biosynthesis genes encoded by the O7 rfb gene cluster of strain VW187 (Escherichia coli O7:K1).</title>
        <authorList>
            <person name="Marolda C.L."/>
            <person name="Valvano M.A."/>
        </authorList>
    </citation>
    <scope>NUCLEOTIDE SEQUENCE [GENOMIC DNA]</scope>
    <source>
        <strain>O7:K1 / VW187</strain>
    </source>
</reference>
<protein>
    <recommendedName>
        <fullName>Phosphomannomutase</fullName>
        <shortName>PMM</shortName>
        <ecNumber>5.4.2.8</ecNumber>
    </recommendedName>
</protein>
<dbReference type="EC" id="5.4.2.8"/>
<dbReference type="EMBL" id="AF125322">
    <property type="protein sequence ID" value="AAC27539.1"/>
    <property type="status" value="ALT_SEQ"/>
    <property type="molecule type" value="Genomic_DNA"/>
</dbReference>
<dbReference type="PIR" id="D40630">
    <property type="entry name" value="D40630"/>
</dbReference>
<dbReference type="SMR" id="P37742"/>
<dbReference type="STRING" id="585034.ECIAI1_2123"/>
<dbReference type="eggNOG" id="COG1109">
    <property type="taxonomic scope" value="Bacteria"/>
</dbReference>
<dbReference type="UniPathway" id="UPA00126">
    <property type="reaction ID" value="UER00424"/>
</dbReference>
<dbReference type="UniPathway" id="UPA00281"/>
<dbReference type="GO" id="GO:0000287">
    <property type="term" value="F:magnesium ion binding"/>
    <property type="evidence" value="ECO:0007669"/>
    <property type="project" value="InterPro"/>
</dbReference>
<dbReference type="GO" id="GO:0004615">
    <property type="term" value="F:phosphomannomutase activity"/>
    <property type="evidence" value="ECO:0007669"/>
    <property type="project" value="UniProtKB-EC"/>
</dbReference>
<dbReference type="GO" id="GO:0009298">
    <property type="term" value="P:GDP-mannose biosynthetic process"/>
    <property type="evidence" value="ECO:0007669"/>
    <property type="project" value="UniProtKB-UniPathway"/>
</dbReference>
<dbReference type="GO" id="GO:0009243">
    <property type="term" value="P:O antigen biosynthetic process"/>
    <property type="evidence" value="ECO:0007669"/>
    <property type="project" value="UniProtKB-UniPathway"/>
</dbReference>
<dbReference type="CDD" id="cd03089">
    <property type="entry name" value="PMM_PGM"/>
    <property type="match status" value="1"/>
</dbReference>
<dbReference type="Gene3D" id="3.40.120.10">
    <property type="entry name" value="Alpha-D-Glucose-1,6-Bisphosphate, subunit A, domain 3"/>
    <property type="match status" value="3"/>
</dbReference>
<dbReference type="Gene3D" id="3.30.310.50">
    <property type="entry name" value="Alpha-D-phosphohexomutase, C-terminal domain"/>
    <property type="match status" value="1"/>
</dbReference>
<dbReference type="InterPro" id="IPR005844">
    <property type="entry name" value="A-D-PHexomutase_a/b/a-I"/>
</dbReference>
<dbReference type="InterPro" id="IPR016055">
    <property type="entry name" value="A-D-PHexomutase_a/b/a-I/II/III"/>
</dbReference>
<dbReference type="InterPro" id="IPR005845">
    <property type="entry name" value="A-D-PHexomutase_a/b/a-II"/>
</dbReference>
<dbReference type="InterPro" id="IPR005846">
    <property type="entry name" value="A-D-PHexomutase_a/b/a-III"/>
</dbReference>
<dbReference type="InterPro" id="IPR036900">
    <property type="entry name" value="A-D-PHexomutase_C_sf"/>
</dbReference>
<dbReference type="InterPro" id="IPR016066">
    <property type="entry name" value="A-D-PHexomutase_CS"/>
</dbReference>
<dbReference type="InterPro" id="IPR005841">
    <property type="entry name" value="Alpha-D-phosphohexomutase_SF"/>
</dbReference>
<dbReference type="NCBIfam" id="NF011943">
    <property type="entry name" value="PRK15414.1"/>
    <property type="match status" value="1"/>
</dbReference>
<dbReference type="PANTHER" id="PTHR43771">
    <property type="entry name" value="PHOSPHOMANNOMUTASE"/>
    <property type="match status" value="1"/>
</dbReference>
<dbReference type="PANTHER" id="PTHR43771:SF1">
    <property type="entry name" value="PHOSPHOMANNOMUTASE"/>
    <property type="match status" value="1"/>
</dbReference>
<dbReference type="Pfam" id="PF02878">
    <property type="entry name" value="PGM_PMM_I"/>
    <property type="match status" value="1"/>
</dbReference>
<dbReference type="Pfam" id="PF02879">
    <property type="entry name" value="PGM_PMM_II"/>
    <property type="match status" value="1"/>
</dbReference>
<dbReference type="Pfam" id="PF02880">
    <property type="entry name" value="PGM_PMM_III"/>
    <property type="match status" value="1"/>
</dbReference>
<dbReference type="PRINTS" id="PR00509">
    <property type="entry name" value="PGMPMM"/>
</dbReference>
<dbReference type="SUPFAM" id="SSF55957">
    <property type="entry name" value="Phosphoglucomutase, C-terminal domain"/>
    <property type="match status" value="1"/>
</dbReference>
<dbReference type="SUPFAM" id="SSF53738">
    <property type="entry name" value="Phosphoglucomutase, first 3 domains"/>
    <property type="match status" value="3"/>
</dbReference>
<dbReference type="PROSITE" id="PS00710">
    <property type="entry name" value="PGM_PMM"/>
    <property type="match status" value="1"/>
</dbReference>
<feature type="chain" id="PRO_0000147823" description="Phosphomannomutase">
    <location>
        <begin position="1"/>
        <end position="453"/>
    </location>
</feature>
<feature type="active site" description="Phosphoserine intermediate" evidence="1">
    <location>
        <position position="96"/>
    </location>
</feature>
<feature type="binding site" description="via phosphate group" evidence="1">
    <location>
        <position position="96"/>
    </location>
    <ligand>
        <name>Mg(2+)</name>
        <dbReference type="ChEBI" id="CHEBI:18420"/>
    </ligand>
</feature>
<feature type="binding site" evidence="1">
    <location>
        <position position="243"/>
    </location>
    <ligand>
        <name>Mg(2+)</name>
        <dbReference type="ChEBI" id="CHEBI:18420"/>
    </ligand>
</feature>
<feature type="binding site" evidence="1">
    <location>
        <position position="245"/>
    </location>
    <ligand>
        <name>Mg(2+)</name>
        <dbReference type="ChEBI" id="CHEBI:18420"/>
    </ligand>
</feature>
<feature type="binding site" evidence="1">
    <location>
        <position position="247"/>
    </location>
    <ligand>
        <name>Mg(2+)</name>
        <dbReference type="ChEBI" id="CHEBI:18420"/>
    </ligand>
</feature>
<proteinExistence type="inferred from homology"/>
<sequence>MLTCFKAYDIRGKLGEELNEDIAWRIGRAYGEFLKPKTIVLGGDVRLTSETLKLALAKGLQDAGVDVLDIGMSGTEEIYFATFHLGVDGGIEVTASHNPMDYNGMKLVREGARPISGDTGLRDVQRLAEANDFPPVDETKRGRYQQINLRDAYVDHLFGYINVKNLTPLKLVINSGNGAAGPVVDAIEARFKALGAPVELIKVHNTPDGNFPNGIPNPLLPECRDDTRNAVIKHGADMGIAFDGDFDRCFLFDEKGQFIEGYYIVGLLAEAFLEKNPGAKIIHDPRLSWNTVDVVTAAGTPVMSKTGHAFIKERMRKEDAIYGGEMSAHHYFRDFAYCDTGMIPWLLVAELVCLKGKTLGELVRDRMAAFPASGEINSKLAHPVEAINRVEQHFSRDAGGGSHRWHQHDLCRLAALTCASSNTEPVVRLNVESRGDVPLMEEKTKLILELLNK</sequence>
<accession>P37742</accession>
<evidence type="ECO:0000250" key="1"/>
<evidence type="ECO:0000305" key="2"/>
<name>RFBK7_ECOLX</name>
<comment type="function">
    <text>Involved in GDP-mannose biosynthesis which serves as the activated sugar nucleotide precursor for mannose residues in cell surface polysaccharides. This enzyme participates in synthesis of the LPS O7 antigen.</text>
</comment>
<comment type="catalytic activity">
    <reaction>
        <text>alpha-D-mannose 1-phosphate = D-mannose 6-phosphate</text>
        <dbReference type="Rhea" id="RHEA:11140"/>
        <dbReference type="ChEBI" id="CHEBI:58409"/>
        <dbReference type="ChEBI" id="CHEBI:58735"/>
        <dbReference type="EC" id="5.4.2.8"/>
    </reaction>
</comment>
<comment type="cofactor">
    <cofactor evidence="1">
        <name>Mg(2+)</name>
        <dbReference type="ChEBI" id="CHEBI:18420"/>
    </cofactor>
    <text evidence="1">Binds 1 Mg(2+) ion per subunit.</text>
</comment>
<comment type="pathway">
    <text>Nucleotide-sugar biosynthesis; GDP-alpha-D-mannose biosynthesis; alpha-D-mannose 1-phosphate from D-fructose 6-phosphate: step 2/2.</text>
</comment>
<comment type="pathway">
    <text>Bacterial outer membrane biogenesis; LPS O-antigen biosynthesis.</text>
</comment>
<comment type="similarity">
    <text evidence="2">Belongs to the phosphohexose mutase family.</text>
</comment>
<keyword id="KW-0413">Isomerase</keyword>
<keyword id="KW-0448">Lipopolysaccharide biosynthesis</keyword>
<keyword id="KW-0460">Magnesium</keyword>
<keyword id="KW-0479">Metal-binding</keyword>
<keyword id="KW-0597">Phosphoprotein</keyword>
<organism>
    <name type="scientific">Escherichia coli</name>
    <dbReference type="NCBI Taxonomy" id="562"/>
    <lineage>
        <taxon>Bacteria</taxon>
        <taxon>Pseudomonadati</taxon>
        <taxon>Pseudomonadota</taxon>
        <taxon>Gammaproteobacteria</taxon>
        <taxon>Enterobacterales</taxon>
        <taxon>Enterobacteriaceae</taxon>
        <taxon>Escherichia</taxon>
    </lineage>
</organism>